<dbReference type="EC" id="2.4.2.7" evidence="1"/>
<dbReference type="EMBL" id="FM204884">
    <property type="protein sequence ID" value="CAW98838.1"/>
    <property type="molecule type" value="Genomic_DNA"/>
</dbReference>
<dbReference type="SMR" id="C0MDK3"/>
<dbReference type="KEGG" id="seq:SZO_07200"/>
<dbReference type="eggNOG" id="COG0503">
    <property type="taxonomic scope" value="Bacteria"/>
</dbReference>
<dbReference type="HOGENOM" id="CLU_063339_3_0_9"/>
<dbReference type="UniPathway" id="UPA00588">
    <property type="reaction ID" value="UER00646"/>
</dbReference>
<dbReference type="Proteomes" id="UP000001368">
    <property type="component" value="Chromosome"/>
</dbReference>
<dbReference type="GO" id="GO:0005737">
    <property type="term" value="C:cytoplasm"/>
    <property type="evidence" value="ECO:0007669"/>
    <property type="project" value="UniProtKB-SubCell"/>
</dbReference>
<dbReference type="GO" id="GO:0002055">
    <property type="term" value="F:adenine binding"/>
    <property type="evidence" value="ECO:0007669"/>
    <property type="project" value="TreeGrafter"/>
</dbReference>
<dbReference type="GO" id="GO:0003999">
    <property type="term" value="F:adenine phosphoribosyltransferase activity"/>
    <property type="evidence" value="ECO:0007669"/>
    <property type="project" value="UniProtKB-UniRule"/>
</dbReference>
<dbReference type="GO" id="GO:0016208">
    <property type="term" value="F:AMP binding"/>
    <property type="evidence" value="ECO:0007669"/>
    <property type="project" value="TreeGrafter"/>
</dbReference>
<dbReference type="GO" id="GO:0006168">
    <property type="term" value="P:adenine salvage"/>
    <property type="evidence" value="ECO:0007669"/>
    <property type="project" value="InterPro"/>
</dbReference>
<dbReference type="GO" id="GO:0044209">
    <property type="term" value="P:AMP salvage"/>
    <property type="evidence" value="ECO:0007669"/>
    <property type="project" value="UniProtKB-UniRule"/>
</dbReference>
<dbReference type="GO" id="GO:0006166">
    <property type="term" value="P:purine ribonucleoside salvage"/>
    <property type="evidence" value="ECO:0007669"/>
    <property type="project" value="UniProtKB-KW"/>
</dbReference>
<dbReference type="CDD" id="cd06223">
    <property type="entry name" value="PRTases_typeI"/>
    <property type="match status" value="1"/>
</dbReference>
<dbReference type="FunFam" id="3.40.50.2020:FF:000004">
    <property type="entry name" value="Adenine phosphoribosyltransferase"/>
    <property type="match status" value="1"/>
</dbReference>
<dbReference type="Gene3D" id="3.40.50.2020">
    <property type="match status" value="1"/>
</dbReference>
<dbReference type="HAMAP" id="MF_00004">
    <property type="entry name" value="Aden_phosphoribosyltr"/>
    <property type="match status" value="1"/>
</dbReference>
<dbReference type="InterPro" id="IPR005764">
    <property type="entry name" value="Ade_phspho_trans"/>
</dbReference>
<dbReference type="InterPro" id="IPR000836">
    <property type="entry name" value="PRibTrfase_dom"/>
</dbReference>
<dbReference type="InterPro" id="IPR029057">
    <property type="entry name" value="PRTase-like"/>
</dbReference>
<dbReference type="InterPro" id="IPR050054">
    <property type="entry name" value="UPRTase/APRTase"/>
</dbReference>
<dbReference type="NCBIfam" id="TIGR01090">
    <property type="entry name" value="apt"/>
    <property type="match status" value="1"/>
</dbReference>
<dbReference type="NCBIfam" id="NF002633">
    <property type="entry name" value="PRK02304.1-2"/>
    <property type="match status" value="1"/>
</dbReference>
<dbReference type="NCBIfam" id="NF002634">
    <property type="entry name" value="PRK02304.1-3"/>
    <property type="match status" value="1"/>
</dbReference>
<dbReference type="NCBIfam" id="NF002636">
    <property type="entry name" value="PRK02304.1-5"/>
    <property type="match status" value="1"/>
</dbReference>
<dbReference type="PANTHER" id="PTHR32315">
    <property type="entry name" value="ADENINE PHOSPHORIBOSYLTRANSFERASE"/>
    <property type="match status" value="1"/>
</dbReference>
<dbReference type="PANTHER" id="PTHR32315:SF3">
    <property type="entry name" value="ADENINE PHOSPHORIBOSYLTRANSFERASE"/>
    <property type="match status" value="1"/>
</dbReference>
<dbReference type="Pfam" id="PF00156">
    <property type="entry name" value="Pribosyltran"/>
    <property type="match status" value="1"/>
</dbReference>
<dbReference type="SUPFAM" id="SSF53271">
    <property type="entry name" value="PRTase-like"/>
    <property type="match status" value="1"/>
</dbReference>
<dbReference type="PROSITE" id="PS00103">
    <property type="entry name" value="PUR_PYR_PR_TRANSFER"/>
    <property type="match status" value="1"/>
</dbReference>
<comment type="function">
    <text evidence="1">Catalyzes a salvage reaction resulting in the formation of AMP, that is energically less costly than de novo synthesis.</text>
</comment>
<comment type="catalytic activity">
    <reaction evidence="1">
        <text>AMP + diphosphate = 5-phospho-alpha-D-ribose 1-diphosphate + adenine</text>
        <dbReference type="Rhea" id="RHEA:16609"/>
        <dbReference type="ChEBI" id="CHEBI:16708"/>
        <dbReference type="ChEBI" id="CHEBI:33019"/>
        <dbReference type="ChEBI" id="CHEBI:58017"/>
        <dbReference type="ChEBI" id="CHEBI:456215"/>
        <dbReference type="EC" id="2.4.2.7"/>
    </reaction>
</comment>
<comment type="pathway">
    <text evidence="1">Purine metabolism; AMP biosynthesis via salvage pathway; AMP from adenine: step 1/1.</text>
</comment>
<comment type="subunit">
    <text evidence="1">Homodimer.</text>
</comment>
<comment type="subcellular location">
    <subcellularLocation>
        <location evidence="1">Cytoplasm</location>
    </subcellularLocation>
</comment>
<comment type="similarity">
    <text evidence="1">Belongs to the purine/pyrimidine phosphoribosyltransferase family.</text>
</comment>
<gene>
    <name evidence="1" type="primary">apt</name>
    <name type="ordered locus">SZO_07200</name>
</gene>
<proteinExistence type="inferred from homology"/>
<name>APT_STRS7</name>
<protein>
    <recommendedName>
        <fullName evidence="1">Adenine phosphoribosyltransferase</fullName>
        <shortName evidence="1">APRT</shortName>
        <ecNumber evidence="1">2.4.2.7</ecNumber>
    </recommendedName>
</protein>
<reference key="1">
    <citation type="journal article" date="2009" name="PLoS Pathog.">
        <title>Genomic evidence for the evolution of Streptococcus equi: host restriction, increased virulence, and genetic exchange with human pathogens.</title>
        <authorList>
            <person name="Holden M.T.G."/>
            <person name="Heather Z."/>
            <person name="Paillot R."/>
            <person name="Steward K.F."/>
            <person name="Webb K."/>
            <person name="Ainslie F."/>
            <person name="Jourdan T."/>
            <person name="Bason N.C."/>
            <person name="Holroyd N.E."/>
            <person name="Mungall K."/>
            <person name="Quail M.A."/>
            <person name="Sanders M."/>
            <person name="Simmonds M."/>
            <person name="Willey D."/>
            <person name="Brooks K."/>
            <person name="Aanensen D.M."/>
            <person name="Spratt B.G."/>
            <person name="Jolley K.A."/>
            <person name="Maiden M.C.J."/>
            <person name="Kehoe M."/>
            <person name="Chanter N."/>
            <person name="Bentley S.D."/>
            <person name="Robinson C."/>
            <person name="Maskell D.J."/>
            <person name="Parkhill J."/>
            <person name="Waller A.S."/>
        </authorList>
    </citation>
    <scope>NUCLEOTIDE SEQUENCE [LARGE SCALE GENOMIC DNA]</scope>
    <source>
        <strain>H70</strain>
    </source>
</reference>
<keyword id="KW-0963">Cytoplasm</keyword>
<keyword id="KW-0328">Glycosyltransferase</keyword>
<keyword id="KW-0660">Purine salvage</keyword>
<keyword id="KW-0808">Transferase</keyword>
<organism>
    <name type="scientific">Streptococcus equi subsp. zooepidemicus (strain H70)</name>
    <dbReference type="NCBI Taxonomy" id="553483"/>
    <lineage>
        <taxon>Bacteria</taxon>
        <taxon>Bacillati</taxon>
        <taxon>Bacillota</taxon>
        <taxon>Bacilli</taxon>
        <taxon>Lactobacillales</taxon>
        <taxon>Streptococcaceae</taxon>
        <taxon>Streptococcus</taxon>
    </lineage>
</organism>
<accession>C0MDK3</accession>
<sequence length="172" mass="18555">MDLTQYIASIENYPKEGITFRDISPLMASGKAYSYAIREIVQYACDKDIDMIVGPEARGFIIGCPVAVELGIGFAPVRKPGKLPREVISASYEKEYGLDTLTMHADAIKPGQRVLIVDDLLATGGTVKATIDLVEKLGGIVAGCAFLIELDGLNGRQAIGDYDCKVLMHFPG</sequence>
<feature type="chain" id="PRO_1000201673" description="Adenine phosphoribosyltransferase">
    <location>
        <begin position="1"/>
        <end position="172"/>
    </location>
</feature>
<evidence type="ECO:0000255" key="1">
    <source>
        <dbReference type="HAMAP-Rule" id="MF_00004"/>
    </source>
</evidence>